<proteinExistence type="inferred from homology"/>
<organism>
    <name type="scientific">Yersinia pseudotuberculosis serotype I (strain IP32953)</name>
    <dbReference type="NCBI Taxonomy" id="273123"/>
    <lineage>
        <taxon>Bacteria</taxon>
        <taxon>Pseudomonadati</taxon>
        <taxon>Pseudomonadota</taxon>
        <taxon>Gammaproteobacteria</taxon>
        <taxon>Enterobacterales</taxon>
        <taxon>Yersiniaceae</taxon>
        <taxon>Yersinia</taxon>
    </lineage>
</organism>
<protein>
    <recommendedName>
        <fullName evidence="1">L-rhamnose mutarotase</fullName>
        <ecNumber evidence="1">5.1.3.32</ecNumber>
    </recommendedName>
    <alternativeName>
        <fullName evidence="1">Rhamnose 1-epimerase</fullName>
    </alternativeName>
    <alternativeName>
        <fullName evidence="1">Type-3 mutarotase</fullName>
    </alternativeName>
</protein>
<keyword id="KW-0119">Carbohydrate metabolism</keyword>
<keyword id="KW-0963">Cytoplasm</keyword>
<keyword id="KW-0413">Isomerase</keyword>
<keyword id="KW-0684">Rhamnose metabolism</keyword>
<name>RHAM_YERPS</name>
<accession>Q66FF7</accession>
<feature type="chain" id="PRO_0000344616" description="L-rhamnose mutarotase">
    <location>
        <begin position="1"/>
        <end position="104"/>
    </location>
</feature>
<feature type="active site" description="Proton donor" evidence="1">
    <location>
        <position position="22"/>
    </location>
</feature>
<feature type="binding site" evidence="1">
    <location>
        <position position="18"/>
    </location>
    <ligand>
        <name>substrate</name>
    </ligand>
</feature>
<feature type="binding site" evidence="1">
    <location>
        <position position="41"/>
    </location>
    <ligand>
        <name>substrate</name>
    </ligand>
</feature>
<feature type="binding site" evidence="1">
    <location>
        <begin position="76"/>
        <end position="77"/>
    </location>
    <ligand>
        <name>substrate</name>
    </ligand>
</feature>
<sequence>MIRKAFVMAVNPDAHAEYQRRHTPIWPELESVLKAHGAHHYSIFLDETRNLLFGVVEIESEERWNAVAQTAECQRWWQHMADVMPSHPDNSPVSQALREVFYLE</sequence>
<comment type="function">
    <text evidence="1">Involved in the anomeric conversion of L-rhamnose.</text>
</comment>
<comment type="catalytic activity">
    <reaction evidence="1">
        <text>alpha-L-rhamnose = beta-L-rhamnose</text>
        <dbReference type="Rhea" id="RHEA:25584"/>
        <dbReference type="ChEBI" id="CHEBI:27586"/>
        <dbReference type="ChEBI" id="CHEBI:27907"/>
        <dbReference type="EC" id="5.1.3.32"/>
    </reaction>
</comment>
<comment type="pathway">
    <text evidence="1">Carbohydrate metabolism; L-rhamnose metabolism.</text>
</comment>
<comment type="subunit">
    <text evidence="1">Homodimer.</text>
</comment>
<comment type="subcellular location">
    <subcellularLocation>
        <location evidence="1">Cytoplasm</location>
    </subcellularLocation>
</comment>
<comment type="similarity">
    <text evidence="1">Belongs to the rhamnose mutarotase family.</text>
</comment>
<dbReference type="EC" id="5.1.3.32" evidence="1"/>
<dbReference type="EMBL" id="BX936398">
    <property type="protein sequence ID" value="CAH19621.1"/>
    <property type="molecule type" value="Genomic_DNA"/>
</dbReference>
<dbReference type="RefSeq" id="WP_002209101.1">
    <property type="nucleotide sequence ID" value="NZ_CP009712.1"/>
</dbReference>
<dbReference type="SMR" id="Q66FF7"/>
<dbReference type="GeneID" id="57974279"/>
<dbReference type="KEGG" id="ypo:BZ17_2189"/>
<dbReference type="KEGG" id="yps:YPTB0381"/>
<dbReference type="PATRIC" id="fig|273123.14.peg.2317"/>
<dbReference type="UniPathway" id="UPA00125"/>
<dbReference type="Proteomes" id="UP000001011">
    <property type="component" value="Chromosome"/>
</dbReference>
<dbReference type="GO" id="GO:0005737">
    <property type="term" value="C:cytoplasm"/>
    <property type="evidence" value="ECO:0007669"/>
    <property type="project" value="UniProtKB-SubCell"/>
</dbReference>
<dbReference type="GO" id="GO:0062192">
    <property type="term" value="F:L-rhamnose mutarotase activity"/>
    <property type="evidence" value="ECO:0007669"/>
    <property type="project" value="UniProtKB-EC"/>
</dbReference>
<dbReference type="GO" id="GO:0019301">
    <property type="term" value="P:rhamnose catabolic process"/>
    <property type="evidence" value="ECO:0007669"/>
    <property type="project" value="TreeGrafter"/>
</dbReference>
<dbReference type="Gene3D" id="3.30.70.100">
    <property type="match status" value="1"/>
</dbReference>
<dbReference type="HAMAP" id="MF_01663">
    <property type="entry name" value="L_rham_rotase"/>
    <property type="match status" value="1"/>
</dbReference>
<dbReference type="InterPro" id="IPR011008">
    <property type="entry name" value="Dimeric_a/b-barrel"/>
</dbReference>
<dbReference type="InterPro" id="IPR013448">
    <property type="entry name" value="L-rhamnose_mutarotase"/>
</dbReference>
<dbReference type="InterPro" id="IPR008000">
    <property type="entry name" value="Rham/fucose_mutarotase"/>
</dbReference>
<dbReference type="NCBIfam" id="TIGR02625">
    <property type="entry name" value="YiiL_rotase"/>
    <property type="match status" value="1"/>
</dbReference>
<dbReference type="PANTHER" id="PTHR34389">
    <property type="entry name" value="L-RHAMNOSE MUTAROTASE"/>
    <property type="match status" value="1"/>
</dbReference>
<dbReference type="PANTHER" id="PTHR34389:SF2">
    <property type="entry name" value="L-RHAMNOSE MUTAROTASE"/>
    <property type="match status" value="1"/>
</dbReference>
<dbReference type="Pfam" id="PF05336">
    <property type="entry name" value="rhaM"/>
    <property type="match status" value="1"/>
</dbReference>
<dbReference type="SUPFAM" id="SSF54909">
    <property type="entry name" value="Dimeric alpha+beta barrel"/>
    <property type="match status" value="1"/>
</dbReference>
<reference key="1">
    <citation type="journal article" date="2004" name="Proc. Natl. Acad. Sci. U.S.A.">
        <title>Insights into the evolution of Yersinia pestis through whole-genome comparison with Yersinia pseudotuberculosis.</title>
        <authorList>
            <person name="Chain P.S.G."/>
            <person name="Carniel E."/>
            <person name="Larimer F.W."/>
            <person name="Lamerdin J."/>
            <person name="Stoutland P.O."/>
            <person name="Regala W.M."/>
            <person name="Georgescu A.M."/>
            <person name="Vergez L.M."/>
            <person name="Land M.L."/>
            <person name="Motin V.L."/>
            <person name="Brubaker R.R."/>
            <person name="Fowler J."/>
            <person name="Hinnebusch J."/>
            <person name="Marceau M."/>
            <person name="Medigue C."/>
            <person name="Simonet M."/>
            <person name="Chenal-Francisque V."/>
            <person name="Souza B."/>
            <person name="Dacheux D."/>
            <person name="Elliott J.M."/>
            <person name="Derbise A."/>
            <person name="Hauser L.J."/>
            <person name="Garcia E."/>
        </authorList>
    </citation>
    <scope>NUCLEOTIDE SEQUENCE [LARGE SCALE GENOMIC DNA]</scope>
    <source>
        <strain>IP32953</strain>
    </source>
</reference>
<evidence type="ECO:0000255" key="1">
    <source>
        <dbReference type="HAMAP-Rule" id="MF_01663"/>
    </source>
</evidence>
<gene>
    <name evidence="1" type="primary">rhaM</name>
    <name type="ordered locus">YPTB0381</name>
</gene>